<evidence type="ECO:0000255" key="1">
    <source>
        <dbReference type="HAMAP-Rule" id="MF_00130"/>
    </source>
</evidence>
<sequence>MVNYPHKVSKKINRTSPISSQRVNFANRGMSFEAAINDSNQYYLAHDIAVIHKKPTPVQIVKVDYPKRSRAKIVEAYFRQASTTDYSGVFKRHYIDFEAKETRQKASMPMKNFHAHQIEHMKQVVKQGGICFVLLHFSTLKETYLLPATHLIEFYQVDMGSKSMPLTFIRQYGFEIQMGRFPSIPYLEIVEKNLLGGESFENYNN</sequence>
<protein>
    <recommendedName>
        <fullName evidence="1">Holliday junction resolvase RecU</fullName>
        <ecNumber evidence="1">3.1.21.10</ecNumber>
    </recommendedName>
    <alternativeName>
        <fullName evidence="1">Recombination protein U homolog</fullName>
    </alternativeName>
</protein>
<accession>A4VZM0</accession>
<keyword id="KW-0963">Cytoplasm</keyword>
<keyword id="KW-0227">DNA damage</keyword>
<keyword id="KW-0233">DNA recombination</keyword>
<keyword id="KW-0234">DNA repair</keyword>
<keyword id="KW-0255">Endonuclease</keyword>
<keyword id="KW-0378">Hydrolase</keyword>
<keyword id="KW-0460">Magnesium</keyword>
<keyword id="KW-0479">Metal-binding</keyword>
<keyword id="KW-0540">Nuclease</keyword>
<comment type="function">
    <text evidence="1">Endonuclease that resolves Holliday junction intermediates in genetic recombination. Cleaves mobile four-strand junctions by introducing symmetrical nicks in paired strands. Promotes annealing of linear ssDNA with homologous dsDNA. Required for DNA repair, homologous recombination and chromosome segregation.</text>
</comment>
<comment type="catalytic activity">
    <reaction evidence="1">
        <text>Endonucleolytic cleavage at a junction such as a reciprocal single-stranded crossover between two homologous DNA duplexes (Holliday junction).</text>
        <dbReference type="EC" id="3.1.21.10"/>
    </reaction>
</comment>
<comment type="cofactor">
    <cofactor evidence="1">
        <name>Mg(2+)</name>
        <dbReference type="ChEBI" id="CHEBI:18420"/>
    </cofactor>
    <text evidence="1">Binds 1 Mg(2+) ion per subunit.</text>
</comment>
<comment type="subcellular location">
    <subcellularLocation>
        <location evidence="1">Cytoplasm</location>
    </subcellularLocation>
</comment>
<comment type="similarity">
    <text evidence="1">Belongs to the RecU family.</text>
</comment>
<proteinExistence type="inferred from homology"/>
<reference key="1">
    <citation type="journal article" date="2007" name="PLoS ONE">
        <title>A glimpse of streptococcal toxic shock syndrome from comparative genomics of S. suis 2 Chinese isolates.</title>
        <authorList>
            <person name="Chen C."/>
            <person name="Tang J."/>
            <person name="Dong W."/>
            <person name="Wang C."/>
            <person name="Feng Y."/>
            <person name="Wang J."/>
            <person name="Zheng F."/>
            <person name="Pan X."/>
            <person name="Liu D."/>
            <person name="Li M."/>
            <person name="Song Y."/>
            <person name="Zhu X."/>
            <person name="Sun H."/>
            <person name="Feng T."/>
            <person name="Guo Z."/>
            <person name="Ju A."/>
            <person name="Ge J."/>
            <person name="Dong Y."/>
            <person name="Sun W."/>
            <person name="Jiang Y."/>
            <person name="Wang J."/>
            <person name="Yan J."/>
            <person name="Yang H."/>
            <person name="Wang X."/>
            <person name="Gao G.F."/>
            <person name="Yang R."/>
            <person name="Wang J."/>
            <person name="Yu J."/>
        </authorList>
    </citation>
    <scope>NUCLEOTIDE SEQUENCE [LARGE SCALE GENOMIC DNA]</scope>
    <source>
        <strain>98HAH33</strain>
    </source>
</reference>
<name>RECU_STRS2</name>
<organism>
    <name type="scientific">Streptococcus suis (strain 98HAH33)</name>
    <dbReference type="NCBI Taxonomy" id="391296"/>
    <lineage>
        <taxon>Bacteria</taxon>
        <taxon>Bacillati</taxon>
        <taxon>Bacillota</taxon>
        <taxon>Bacilli</taxon>
        <taxon>Lactobacillales</taxon>
        <taxon>Streptococcaceae</taxon>
        <taxon>Streptococcus</taxon>
    </lineage>
</organism>
<feature type="chain" id="PRO_1000016754" description="Holliday junction resolvase RecU">
    <location>
        <begin position="1"/>
        <end position="205"/>
    </location>
</feature>
<feature type="binding site" evidence="1">
    <location>
        <position position="83"/>
    </location>
    <ligand>
        <name>Mg(2+)</name>
        <dbReference type="ChEBI" id="CHEBI:18420"/>
    </ligand>
</feature>
<feature type="binding site" evidence="1">
    <location>
        <position position="85"/>
    </location>
    <ligand>
        <name>Mg(2+)</name>
        <dbReference type="ChEBI" id="CHEBI:18420"/>
    </ligand>
</feature>
<feature type="binding site" evidence="1">
    <location>
        <position position="98"/>
    </location>
    <ligand>
        <name>Mg(2+)</name>
        <dbReference type="ChEBI" id="CHEBI:18420"/>
    </ligand>
</feature>
<feature type="binding site" evidence="1">
    <location>
        <position position="117"/>
    </location>
    <ligand>
        <name>Mg(2+)</name>
        <dbReference type="ChEBI" id="CHEBI:18420"/>
    </ligand>
</feature>
<feature type="site" description="Transition state stabilizer" evidence="1">
    <location>
        <position position="100"/>
    </location>
</feature>
<gene>
    <name evidence="1" type="primary">recU</name>
    <name type="ordered locus">SSU98_0401</name>
</gene>
<dbReference type="EC" id="3.1.21.10" evidence="1"/>
<dbReference type="EMBL" id="CP000408">
    <property type="protein sequence ID" value="ABP91559.1"/>
    <property type="molecule type" value="Genomic_DNA"/>
</dbReference>
<dbReference type="SMR" id="A4VZM0"/>
<dbReference type="KEGG" id="ssv:SSU98_0401"/>
<dbReference type="HOGENOM" id="CLU_096340_0_0_9"/>
<dbReference type="GO" id="GO:0005737">
    <property type="term" value="C:cytoplasm"/>
    <property type="evidence" value="ECO:0007669"/>
    <property type="project" value="UniProtKB-SubCell"/>
</dbReference>
<dbReference type="GO" id="GO:0004519">
    <property type="term" value="F:endonuclease activity"/>
    <property type="evidence" value="ECO:0007669"/>
    <property type="project" value="UniProtKB-UniRule"/>
</dbReference>
<dbReference type="GO" id="GO:0000287">
    <property type="term" value="F:magnesium ion binding"/>
    <property type="evidence" value="ECO:0007669"/>
    <property type="project" value="UniProtKB-UniRule"/>
</dbReference>
<dbReference type="GO" id="GO:0003676">
    <property type="term" value="F:nucleic acid binding"/>
    <property type="evidence" value="ECO:0007669"/>
    <property type="project" value="InterPro"/>
</dbReference>
<dbReference type="GO" id="GO:0007059">
    <property type="term" value="P:chromosome segregation"/>
    <property type="evidence" value="ECO:0007669"/>
    <property type="project" value="UniProtKB-UniRule"/>
</dbReference>
<dbReference type="GO" id="GO:0006310">
    <property type="term" value="P:DNA recombination"/>
    <property type="evidence" value="ECO:0007669"/>
    <property type="project" value="UniProtKB-UniRule"/>
</dbReference>
<dbReference type="GO" id="GO:0006281">
    <property type="term" value="P:DNA repair"/>
    <property type="evidence" value="ECO:0007669"/>
    <property type="project" value="UniProtKB-UniRule"/>
</dbReference>
<dbReference type="CDD" id="cd22354">
    <property type="entry name" value="RecU-like"/>
    <property type="match status" value="1"/>
</dbReference>
<dbReference type="Gene3D" id="3.40.1350.10">
    <property type="match status" value="1"/>
</dbReference>
<dbReference type="HAMAP" id="MF_00130">
    <property type="entry name" value="RecU"/>
    <property type="match status" value="1"/>
</dbReference>
<dbReference type="InterPro" id="IPR004612">
    <property type="entry name" value="Resolv_RecU"/>
</dbReference>
<dbReference type="InterPro" id="IPR011335">
    <property type="entry name" value="Restrct_endonuc-II-like"/>
</dbReference>
<dbReference type="InterPro" id="IPR011856">
    <property type="entry name" value="tRNA_endonuc-like_dom_sf"/>
</dbReference>
<dbReference type="NCBIfam" id="NF002580">
    <property type="entry name" value="PRK02234.1-1"/>
    <property type="match status" value="1"/>
</dbReference>
<dbReference type="NCBIfam" id="NF002584">
    <property type="entry name" value="PRK02234.1-5"/>
    <property type="match status" value="1"/>
</dbReference>
<dbReference type="NCBIfam" id="TIGR00648">
    <property type="entry name" value="recU"/>
    <property type="match status" value="1"/>
</dbReference>
<dbReference type="Pfam" id="PF03838">
    <property type="entry name" value="RecU"/>
    <property type="match status" value="1"/>
</dbReference>
<dbReference type="PIRSF" id="PIRSF037785">
    <property type="entry name" value="RecU"/>
    <property type="match status" value="1"/>
</dbReference>
<dbReference type="SUPFAM" id="SSF52980">
    <property type="entry name" value="Restriction endonuclease-like"/>
    <property type="match status" value="1"/>
</dbReference>